<gene>
    <name evidence="1" type="primary">lpxK</name>
    <name type="ordered locus">Pnec_0312</name>
</gene>
<reference key="1">
    <citation type="journal article" date="2013" name="Proc. Natl. Acad. Sci. U.S.A.">
        <title>Polynucleobacter necessarius, a model for genome reduction in both free-living and symbiotic bacteria.</title>
        <authorList>
            <person name="Boscaro V."/>
            <person name="Felletti M."/>
            <person name="Vannini C."/>
            <person name="Ackerman M.S."/>
            <person name="Chain P.S."/>
            <person name="Malfatti S."/>
            <person name="Vergez L.M."/>
            <person name="Shin M."/>
            <person name="Doak T.G."/>
            <person name="Lynch M."/>
            <person name="Petroni G."/>
        </authorList>
    </citation>
    <scope>NUCLEOTIDE SEQUENCE [LARGE SCALE GENOMIC DNA]</scope>
    <source>
        <strain>STIR1</strain>
    </source>
</reference>
<accession>B1XTC8</accession>
<comment type="function">
    <text evidence="1">Transfers the gamma-phosphate of ATP to the 4'-position of a tetraacyldisaccharide 1-phosphate intermediate (termed DS-1-P) to form tetraacyldisaccharide 1,4'-bis-phosphate (lipid IVA).</text>
</comment>
<comment type="catalytic activity">
    <reaction evidence="1">
        <text>a lipid A disaccharide + ATP = a lipid IVA + ADP + H(+)</text>
        <dbReference type="Rhea" id="RHEA:67840"/>
        <dbReference type="ChEBI" id="CHEBI:15378"/>
        <dbReference type="ChEBI" id="CHEBI:30616"/>
        <dbReference type="ChEBI" id="CHEBI:176343"/>
        <dbReference type="ChEBI" id="CHEBI:176425"/>
        <dbReference type="ChEBI" id="CHEBI:456216"/>
        <dbReference type="EC" id="2.7.1.130"/>
    </reaction>
</comment>
<comment type="pathway">
    <text evidence="1">Glycolipid biosynthesis; lipid IV(A) biosynthesis; lipid IV(A) from (3R)-3-hydroxytetradecanoyl-[acyl-carrier-protein] and UDP-N-acetyl-alpha-D-glucosamine: step 6/6.</text>
</comment>
<comment type="similarity">
    <text evidence="1">Belongs to the LpxK family.</text>
</comment>
<sequence length="366" mass="40884">MSFSFFRKAPKFWERRGPTSLLLWPLSWIYGLVLHARKLIQDTGFVKPKPAPVPIIIVGNIRVGGTGKTPIVIALAERLQQLGWNPGIISRGYGGKGSSAQTSPLQVKSNSDPTLVGDEPVLIARRTHDQFPIWVFPKRQQSIRELLKHSPNVNVIISDDGLQHSGLARWPAREGGRDIELVVRDERGEGNRFLLPAGPLREPATRERDATLFTGKIKSDDHQIGLQDEYFLGRRAFSLLSNLGKPYQLNNPANTQTLTQIADSYLPNKITTVAALGNPQRFFDDLLKNGIAGKTISLPDHATYTPEFFTKLNAQCILITEKDAVKCSAIMDECIWVVPMSLALSDNLAEWLQSILQRPDPYRYTL</sequence>
<name>LPXK_POLNS</name>
<proteinExistence type="inferred from homology"/>
<keyword id="KW-0067">ATP-binding</keyword>
<keyword id="KW-0418">Kinase</keyword>
<keyword id="KW-0441">Lipid A biosynthesis</keyword>
<keyword id="KW-0444">Lipid biosynthesis</keyword>
<keyword id="KW-0443">Lipid metabolism</keyword>
<keyword id="KW-0547">Nucleotide-binding</keyword>
<keyword id="KW-0808">Transferase</keyword>
<dbReference type="EC" id="2.7.1.130" evidence="1"/>
<dbReference type="EMBL" id="CP001010">
    <property type="protein sequence ID" value="ACB43605.1"/>
    <property type="molecule type" value="Genomic_DNA"/>
</dbReference>
<dbReference type="SMR" id="B1XTC8"/>
<dbReference type="STRING" id="452638.Pnec_0312"/>
<dbReference type="KEGG" id="pne:Pnec_0312"/>
<dbReference type="eggNOG" id="COG1663">
    <property type="taxonomic scope" value="Bacteria"/>
</dbReference>
<dbReference type="HOGENOM" id="CLU_038816_2_0_4"/>
<dbReference type="OrthoDB" id="9766423at2"/>
<dbReference type="UniPathway" id="UPA00359">
    <property type="reaction ID" value="UER00482"/>
</dbReference>
<dbReference type="GO" id="GO:0005886">
    <property type="term" value="C:plasma membrane"/>
    <property type="evidence" value="ECO:0007669"/>
    <property type="project" value="TreeGrafter"/>
</dbReference>
<dbReference type="GO" id="GO:0005524">
    <property type="term" value="F:ATP binding"/>
    <property type="evidence" value="ECO:0007669"/>
    <property type="project" value="UniProtKB-UniRule"/>
</dbReference>
<dbReference type="GO" id="GO:0009029">
    <property type="term" value="F:tetraacyldisaccharide 4'-kinase activity"/>
    <property type="evidence" value="ECO:0007669"/>
    <property type="project" value="UniProtKB-UniRule"/>
</dbReference>
<dbReference type="GO" id="GO:0009245">
    <property type="term" value="P:lipid A biosynthetic process"/>
    <property type="evidence" value="ECO:0007669"/>
    <property type="project" value="UniProtKB-UniRule"/>
</dbReference>
<dbReference type="GO" id="GO:0009244">
    <property type="term" value="P:lipopolysaccharide core region biosynthetic process"/>
    <property type="evidence" value="ECO:0007669"/>
    <property type="project" value="TreeGrafter"/>
</dbReference>
<dbReference type="HAMAP" id="MF_00409">
    <property type="entry name" value="LpxK"/>
    <property type="match status" value="1"/>
</dbReference>
<dbReference type="InterPro" id="IPR003758">
    <property type="entry name" value="LpxK"/>
</dbReference>
<dbReference type="InterPro" id="IPR027417">
    <property type="entry name" value="P-loop_NTPase"/>
</dbReference>
<dbReference type="NCBIfam" id="TIGR00682">
    <property type="entry name" value="lpxK"/>
    <property type="match status" value="1"/>
</dbReference>
<dbReference type="PANTHER" id="PTHR42724">
    <property type="entry name" value="TETRAACYLDISACCHARIDE 4'-KINASE"/>
    <property type="match status" value="1"/>
</dbReference>
<dbReference type="PANTHER" id="PTHR42724:SF1">
    <property type="entry name" value="TETRAACYLDISACCHARIDE 4'-KINASE, MITOCHONDRIAL-RELATED"/>
    <property type="match status" value="1"/>
</dbReference>
<dbReference type="Pfam" id="PF02606">
    <property type="entry name" value="LpxK"/>
    <property type="match status" value="1"/>
</dbReference>
<dbReference type="SUPFAM" id="SSF52540">
    <property type="entry name" value="P-loop containing nucleoside triphosphate hydrolases"/>
    <property type="match status" value="1"/>
</dbReference>
<organism>
    <name type="scientific">Polynucleobacter necessarius subsp. necessarius (strain STIR1)</name>
    <dbReference type="NCBI Taxonomy" id="452638"/>
    <lineage>
        <taxon>Bacteria</taxon>
        <taxon>Pseudomonadati</taxon>
        <taxon>Pseudomonadota</taxon>
        <taxon>Betaproteobacteria</taxon>
        <taxon>Burkholderiales</taxon>
        <taxon>Burkholderiaceae</taxon>
        <taxon>Polynucleobacter</taxon>
    </lineage>
</organism>
<feature type="chain" id="PRO_1000123727" description="Tetraacyldisaccharide 4'-kinase">
    <location>
        <begin position="1"/>
        <end position="366"/>
    </location>
</feature>
<feature type="binding site" evidence="1">
    <location>
        <begin position="62"/>
        <end position="69"/>
    </location>
    <ligand>
        <name>ATP</name>
        <dbReference type="ChEBI" id="CHEBI:30616"/>
    </ligand>
</feature>
<protein>
    <recommendedName>
        <fullName evidence="1">Tetraacyldisaccharide 4'-kinase</fullName>
        <ecNumber evidence="1">2.7.1.130</ecNumber>
    </recommendedName>
    <alternativeName>
        <fullName evidence="1">Lipid A 4'-kinase</fullName>
    </alternativeName>
</protein>
<evidence type="ECO:0000255" key="1">
    <source>
        <dbReference type="HAMAP-Rule" id="MF_00409"/>
    </source>
</evidence>